<sequence>MKLRPLHDRVVIRRSEEESKTAGGIVLPGSAAEKPNRGEVVAVGTGRILDNGEVRALAVKVGDKVVFGPYSGSNTVKVDGEDLLVMAENEILAVIEG</sequence>
<name>CH10_PSEE4</name>
<reference key="1">
    <citation type="journal article" date="2006" name="Nat. Biotechnol.">
        <title>Complete genome sequence of the entomopathogenic and metabolically versatile soil bacterium Pseudomonas entomophila.</title>
        <authorList>
            <person name="Vodovar N."/>
            <person name="Vallenet D."/>
            <person name="Cruveiller S."/>
            <person name="Rouy Z."/>
            <person name="Barbe V."/>
            <person name="Acosta C."/>
            <person name="Cattolico L."/>
            <person name="Jubin C."/>
            <person name="Lajus A."/>
            <person name="Segurens B."/>
            <person name="Vacherie B."/>
            <person name="Wincker P."/>
            <person name="Weissenbach J."/>
            <person name="Lemaitre B."/>
            <person name="Medigue C."/>
            <person name="Boccard F."/>
        </authorList>
    </citation>
    <scope>NUCLEOTIDE SEQUENCE [LARGE SCALE GENOMIC DNA]</scope>
    <source>
        <strain>L48</strain>
    </source>
</reference>
<proteinExistence type="inferred from homology"/>
<feature type="chain" id="PRO_1000025335" description="Co-chaperonin GroES">
    <location>
        <begin position="1"/>
        <end position="97"/>
    </location>
</feature>
<evidence type="ECO:0000255" key="1">
    <source>
        <dbReference type="HAMAP-Rule" id="MF_00580"/>
    </source>
</evidence>
<gene>
    <name evidence="1" type="primary">groES</name>
    <name evidence="1" type="synonym">groS</name>
    <name type="ordered locus">PSEEN4461</name>
</gene>
<comment type="function">
    <text evidence="1">Together with the chaperonin GroEL, plays an essential role in assisting protein folding. The GroEL-GroES system forms a nano-cage that allows encapsulation of the non-native substrate proteins and provides a physical environment optimized to promote and accelerate protein folding. GroES binds to the apical surface of the GroEL ring, thereby capping the opening of the GroEL channel.</text>
</comment>
<comment type="subunit">
    <text evidence="1">Heptamer of 7 subunits arranged in a ring. Interacts with the chaperonin GroEL.</text>
</comment>
<comment type="subcellular location">
    <subcellularLocation>
        <location evidence="1">Cytoplasm</location>
    </subcellularLocation>
</comment>
<comment type="similarity">
    <text evidence="1">Belongs to the GroES chaperonin family.</text>
</comment>
<keyword id="KW-0143">Chaperone</keyword>
<keyword id="KW-0963">Cytoplasm</keyword>
<organism>
    <name type="scientific">Pseudomonas entomophila (strain L48)</name>
    <dbReference type="NCBI Taxonomy" id="384676"/>
    <lineage>
        <taxon>Bacteria</taxon>
        <taxon>Pseudomonadati</taxon>
        <taxon>Pseudomonadota</taxon>
        <taxon>Gammaproteobacteria</taxon>
        <taxon>Pseudomonadales</taxon>
        <taxon>Pseudomonadaceae</taxon>
        <taxon>Pseudomonas</taxon>
    </lineage>
</organism>
<protein>
    <recommendedName>
        <fullName evidence="1">Co-chaperonin GroES</fullName>
    </recommendedName>
    <alternativeName>
        <fullName evidence="1">10 kDa chaperonin</fullName>
    </alternativeName>
    <alternativeName>
        <fullName evidence="1">Chaperonin-10</fullName>
        <shortName evidence="1">Cpn10</shortName>
    </alternativeName>
</protein>
<accession>Q1I5E1</accession>
<dbReference type="EMBL" id="CT573326">
    <property type="protein sequence ID" value="CAK17144.1"/>
    <property type="molecule type" value="Genomic_DNA"/>
</dbReference>
<dbReference type="RefSeq" id="WP_003260750.1">
    <property type="nucleotide sequence ID" value="NC_008027.1"/>
</dbReference>
<dbReference type="SMR" id="Q1I5E1"/>
<dbReference type="STRING" id="384676.PSEEN4461"/>
<dbReference type="KEGG" id="pen:PSEEN4461"/>
<dbReference type="eggNOG" id="COG0234">
    <property type="taxonomic scope" value="Bacteria"/>
</dbReference>
<dbReference type="HOGENOM" id="CLU_132825_2_0_6"/>
<dbReference type="OrthoDB" id="9806791at2"/>
<dbReference type="Proteomes" id="UP000000658">
    <property type="component" value="Chromosome"/>
</dbReference>
<dbReference type="GO" id="GO:0005737">
    <property type="term" value="C:cytoplasm"/>
    <property type="evidence" value="ECO:0007669"/>
    <property type="project" value="UniProtKB-SubCell"/>
</dbReference>
<dbReference type="GO" id="GO:0005524">
    <property type="term" value="F:ATP binding"/>
    <property type="evidence" value="ECO:0007669"/>
    <property type="project" value="InterPro"/>
</dbReference>
<dbReference type="GO" id="GO:0046872">
    <property type="term" value="F:metal ion binding"/>
    <property type="evidence" value="ECO:0007669"/>
    <property type="project" value="TreeGrafter"/>
</dbReference>
<dbReference type="GO" id="GO:0044183">
    <property type="term" value="F:protein folding chaperone"/>
    <property type="evidence" value="ECO:0007669"/>
    <property type="project" value="InterPro"/>
</dbReference>
<dbReference type="GO" id="GO:0051087">
    <property type="term" value="F:protein-folding chaperone binding"/>
    <property type="evidence" value="ECO:0007669"/>
    <property type="project" value="TreeGrafter"/>
</dbReference>
<dbReference type="GO" id="GO:0051082">
    <property type="term" value="F:unfolded protein binding"/>
    <property type="evidence" value="ECO:0007669"/>
    <property type="project" value="TreeGrafter"/>
</dbReference>
<dbReference type="GO" id="GO:0051085">
    <property type="term" value="P:chaperone cofactor-dependent protein refolding"/>
    <property type="evidence" value="ECO:0007669"/>
    <property type="project" value="TreeGrafter"/>
</dbReference>
<dbReference type="CDD" id="cd00320">
    <property type="entry name" value="cpn10"/>
    <property type="match status" value="1"/>
</dbReference>
<dbReference type="FunFam" id="2.30.33.40:FF:000001">
    <property type="entry name" value="10 kDa chaperonin"/>
    <property type="match status" value="1"/>
</dbReference>
<dbReference type="Gene3D" id="2.30.33.40">
    <property type="entry name" value="GroES chaperonin"/>
    <property type="match status" value="1"/>
</dbReference>
<dbReference type="HAMAP" id="MF_00580">
    <property type="entry name" value="CH10"/>
    <property type="match status" value="1"/>
</dbReference>
<dbReference type="InterPro" id="IPR020818">
    <property type="entry name" value="Chaperonin_GroES"/>
</dbReference>
<dbReference type="InterPro" id="IPR037124">
    <property type="entry name" value="Chaperonin_GroES_sf"/>
</dbReference>
<dbReference type="InterPro" id="IPR018369">
    <property type="entry name" value="Chaprnonin_Cpn10_CS"/>
</dbReference>
<dbReference type="InterPro" id="IPR011032">
    <property type="entry name" value="GroES-like_sf"/>
</dbReference>
<dbReference type="NCBIfam" id="NF001526">
    <property type="entry name" value="PRK00364.1-1"/>
    <property type="match status" value="1"/>
</dbReference>
<dbReference type="NCBIfam" id="NF001527">
    <property type="entry name" value="PRK00364.1-2"/>
    <property type="match status" value="1"/>
</dbReference>
<dbReference type="NCBIfam" id="NF001531">
    <property type="entry name" value="PRK00364.2-2"/>
    <property type="match status" value="1"/>
</dbReference>
<dbReference type="NCBIfam" id="NF001533">
    <property type="entry name" value="PRK00364.2-4"/>
    <property type="match status" value="1"/>
</dbReference>
<dbReference type="PANTHER" id="PTHR10772">
    <property type="entry name" value="10 KDA HEAT SHOCK PROTEIN"/>
    <property type="match status" value="1"/>
</dbReference>
<dbReference type="PANTHER" id="PTHR10772:SF58">
    <property type="entry name" value="CO-CHAPERONIN GROES"/>
    <property type="match status" value="1"/>
</dbReference>
<dbReference type="Pfam" id="PF00166">
    <property type="entry name" value="Cpn10"/>
    <property type="match status" value="1"/>
</dbReference>
<dbReference type="PRINTS" id="PR00297">
    <property type="entry name" value="CHAPERONIN10"/>
</dbReference>
<dbReference type="SMART" id="SM00883">
    <property type="entry name" value="Cpn10"/>
    <property type="match status" value="1"/>
</dbReference>
<dbReference type="SUPFAM" id="SSF50129">
    <property type="entry name" value="GroES-like"/>
    <property type="match status" value="1"/>
</dbReference>
<dbReference type="PROSITE" id="PS00681">
    <property type="entry name" value="CHAPERONINS_CPN10"/>
    <property type="match status" value="1"/>
</dbReference>